<name>PROTO_PROSY</name>
<organism>
    <name type="scientific">Protonectarina sylveirae</name>
    <name type="common">Brazilian wasp</name>
    <dbReference type="NCBI Taxonomy" id="91438"/>
    <lineage>
        <taxon>Eukaryota</taxon>
        <taxon>Metazoa</taxon>
        <taxon>Ecdysozoa</taxon>
        <taxon>Arthropoda</taxon>
        <taxon>Hexapoda</taxon>
        <taxon>Insecta</taxon>
        <taxon>Pterygota</taxon>
        <taxon>Neoptera</taxon>
        <taxon>Endopterygota</taxon>
        <taxon>Hymenoptera</taxon>
        <taxon>Apocrita</taxon>
        <taxon>Aculeata</taxon>
        <taxon>Vespoidea</taxon>
        <taxon>Vespidae</taxon>
        <taxon>Polistinae</taxon>
        <taxon>Epiponini</taxon>
        <taxon>Protonectarina</taxon>
    </lineage>
</organism>
<accession>P0C1R1</accession>
<protein>
    <recommendedName>
        <fullName evidence="5">Protonectin</fullName>
        <shortName evidence="2">PTN</shortName>
    </recommendedName>
</protein>
<keyword id="KW-0027">Amidation</keyword>
<keyword id="KW-0044">Antibiotic</keyword>
<keyword id="KW-0929">Antimicrobial</keyword>
<keyword id="KW-0145">Chemotaxis</keyword>
<keyword id="KW-0903">Direct protein sequencing</keyword>
<keyword id="KW-0295">Fungicide</keyword>
<keyword id="KW-1213">G-protein coupled receptor impairing toxin</keyword>
<keyword id="KW-0391">Immunity</keyword>
<keyword id="KW-0399">Innate immunity</keyword>
<keyword id="KW-0467">Mast cell degranulation</keyword>
<keyword id="KW-0472">Membrane</keyword>
<keyword id="KW-0677">Repeat</keyword>
<keyword id="KW-0964">Secreted</keyword>
<keyword id="KW-1052">Target cell membrane</keyword>
<keyword id="KW-1053">Target membrane</keyword>
<keyword id="KW-0800">Toxin</keyword>
<proteinExistence type="evidence at protein level"/>
<evidence type="ECO:0000250" key="1">
    <source>
        <dbReference type="UniProtKB" id="P01514"/>
    </source>
</evidence>
<evidence type="ECO:0000250" key="2">
    <source>
        <dbReference type="UniProtKB" id="P69437"/>
    </source>
</evidence>
<evidence type="ECO:0000250" key="3">
    <source>
        <dbReference type="UniProtKB" id="P84914"/>
    </source>
</evidence>
<evidence type="ECO:0000269" key="4">
    <source>
    </source>
</evidence>
<evidence type="ECO:0000303" key="5">
    <source>
    </source>
</evidence>
<evidence type="ECO:0000305" key="6"/>
<evidence type="ECO:0000305" key="7">
    <source>
    </source>
</evidence>
<feature type="peptide" id="PRO_0000247270" description="Protonectin" evidence="4">
    <location>
        <begin position="1"/>
        <end position="12"/>
    </location>
</feature>
<feature type="short sequence motif" description="Dimerization motif 1" evidence="2">
    <location>
        <begin position="3"/>
        <end position="7"/>
    </location>
</feature>
<feature type="short sequence motif" description="Dimerization motif 2" evidence="2">
    <location>
        <begin position="7"/>
        <end position="11"/>
    </location>
</feature>
<feature type="modified residue" description="Leucine amide" evidence="4">
    <location>
        <position position="12"/>
    </location>
</feature>
<dbReference type="SMR" id="P0C1R1"/>
<dbReference type="GO" id="GO:0005576">
    <property type="term" value="C:extracellular region"/>
    <property type="evidence" value="ECO:0007669"/>
    <property type="project" value="UniProtKB-SubCell"/>
</dbReference>
<dbReference type="GO" id="GO:0016020">
    <property type="term" value="C:membrane"/>
    <property type="evidence" value="ECO:0007669"/>
    <property type="project" value="UniProtKB-KW"/>
</dbReference>
<dbReference type="GO" id="GO:0044218">
    <property type="term" value="C:other organism cell membrane"/>
    <property type="evidence" value="ECO:0007669"/>
    <property type="project" value="UniProtKB-KW"/>
</dbReference>
<dbReference type="GO" id="GO:0090729">
    <property type="term" value="F:toxin activity"/>
    <property type="evidence" value="ECO:0007669"/>
    <property type="project" value="UniProtKB-KW"/>
</dbReference>
<dbReference type="GO" id="GO:0006935">
    <property type="term" value="P:chemotaxis"/>
    <property type="evidence" value="ECO:0007669"/>
    <property type="project" value="UniProtKB-KW"/>
</dbReference>
<dbReference type="GO" id="GO:0042742">
    <property type="term" value="P:defense response to bacterium"/>
    <property type="evidence" value="ECO:0007669"/>
    <property type="project" value="UniProtKB-KW"/>
</dbReference>
<dbReference type="GO" id="GO:0050832">
    <property type="term" value="P:defense response to fungus"/>
    <property type="evidence" value="ECO:0007669"/>
    <property type="project" value="UniProtKB-KW"/>
</dbReference>
<dbReference type="GO" id="GO:0045087">
    <property type="term" value="P:innate immune response"/>
    <property type="evidence" value="ECO:0007669"/>
    <property type="project" value="UniProtKB-KW"/>
</dbReference>
<dbReference type="GO" id="GO:0031640">
    <property type="term" value="P:killing of cells of another organism"/>
    <property type="evidence" value="ECO:0007669"/>
    <property type="project" value="UniProtKB-KW"/>
</dbReference>
<sequence length="12" mass="1211">ILGTILGLLKGL</sequence>
<reference key="1">
    <citation type="journal article" date="1993" name="Nat. Toxins">
        <title>Isolation and sequence analysis of peptides from the venom of Protonectarina sylveirae (Hymenoptera-Vespidae).</title>
        <authorList>
            <person name="Dohtsu K."/>
            <person name="Okumura K."/>
            <person name="Hagiwara K."/>
            <person name="Palma M.S."/>
            <person name="Nakajima T."/>
        </authorList>
    </citation>
    <scope>PROTEIN SEQUENCE</scope>
    <scope>FUNCTION</scope>
    <scope>SYNTHESIS</scope>
    <scope>IDENTIFICATION BY MASS SPECTROMETRY</scope>
    <scope>AMIDATION AT LEU-12</scope>
    <scope>SUBCELLULAR LOCATION</scope>
    <source>
        <tissue>Venom</tissue>
    </source>
</reference>
<comment type="function">
    <text evidence="1 2 3 4">Potent antimicrobial peptide that acts by disruption of the integrity of the membrane, thanks to its alpha-helical conformation in the membrane (By similarity). Shows potent antibacterial activity against both Gram-positive and Gram-negative bacteria (MIC=4-128 uM) (By similarity). Is also active on yeasts (mainly tested on Candida cells, MIC=4-128 uM), by disrupting the membrane integrity and inducing the production of cellular reactive oxygen species (ROS) (By similarity). In addition, inhibits the formation of yeast biofilms and kills the adherent fungi cells (By similarity). Has relative binding specificity with the yeast polysaccharide laminarin, but not with the yeast polysaccharide mannan (By similarity). Also has mast cell degranulation activity, and induces a potent chemotaxis in polymorphonucleated leukocyte (PMNL) cells (By similarity) (PubMed:7513243). Its mast cell degranulation activity may be related to the activation of G-protein coupled receptors in mast cells as well as interaction with other proteins located in cell endosomal membranes in the mast cells (By similarity). Shows weak hemolytic activity (EC(50)=80 uM) (By similarity). In vivo, exhibits anti-nociceptive activity (at 8 nmol, intracerebroventricular injection) (By similarity). Is toxic to cancer (Melanoma MM96L, and colorectal cancer HCT 116) and non-cancer cell lines (HaCaT, and HEK293) (By similarity). Is also much more toxic to metastatic breast cancer cell lines (MDA-MB-231) than to non-cancerous epithelial breast cell lines (MCF-10) (By similarity).</text>
</comment>
<comment type="subunit">
    <text evidence="2">May form homodimer.</text>
</comment>
<comment type="subcellular location">
    <subcellularLocation>
        <location evidence="4">Secreted</location>
    </subcellularLocation>
    <subcellularLocation>
        <location evidence="2">Target cell membrane</location>
    </subcellularLocation>
    <text evidence="2">Assumes an amphipathic alpha-helical conformation in a membrane-like environment (By similarity). Does not affect lipid packing, suggesting a superficial interaction with the membrane (By similarity).</text>
</comment>
<comment type="tissue specificity">
    <text evidence="7">Venom gland.</text>
</comment>
<comment type="miscellaneous">
    <text evidence="6">The primary structure of this peptide is identical to that of protonectins from Agelaia p. pallipes (AC P69437).</text>
</comment>
<comment type="similarity">
    <text evidence="6">Belongs to the MCD family. Protonectin subfamily.</text>
</comment>